<dbReference type="EMBL" id="CR380956">
    <property type="protein sequence ID" value="CAG61041.1"/>
    <property type="molecule type" value="Genomic_DNA"/>
</dbReference>
<dbReference type="RefSeq" id="XP_448090.1">
    <property type="nucleotide sequence ID" value="XM_448090.1"/>
</dbReference>
<dbReference type="SMR" id="Q6FNV4"/>
<dbReference type="FunCoup" id="Q6FNV4">
    <property type="interactions" value="1169"/>
</dbReference>
<dbReference type="STRING" id="284593.Q6FNV4"/>
<dbReference type="EnsemblFungi" id="CAGL0J08778g-T">
    <property type="protein sequence ID" value="CAGL0J08778g-T-p1"/>
    <property type="gene ID" value="CAGL0J08778g"/>
</dbReference>
<dbReference type="KEGG" id="cgr:2889676"/>
<dbReference type="CGD" id="CAL0133190">
    <property type="gene designation" value="CAGL0J08778g"/>
</dbReference>
<dbReference type="VEuPathDB" id="FungiDB:B1J91_J08778g"/>
<dbReference type="VEuPathDB" id="FungiDB:CAGL0J08778g"/>
<dbReference type="eggNOG" id="KOG1332">
    <property type="taxonomic scope" value="Eukaryota"/>
</dbReference>
<dbReference type="HOGENOM" id="CLU_032441_0_1_1"/>
<dbReference type="InParanoid" id="Q6FNV4"/>
<dbReference type="OMA" id="IWKEEGD"/>
<dbReference type="Proteomes" id="UP000002428">
    <property type="component" value="Chromosome J"/>
</dbReference>
<dbReference type="GO" id="GO:0030127">
    <property type="term" value="C:COPII vesicle coat"/>
    <property type="evidence" value="ECO:0007669"/>
    <property type="project" value="EnsemblFungi"/>
</dbReference>
<dbReference type="GO" id="GO:0005789">
    <property type="term" value="C:endoplasmic reticulum membrane"/>
    <property type="evidence" value="ECO:0007669"/>
    <property type="project" value="UniProtKB-SubCell"/>
</dbReference>
<dbReference type="GO" id="GO:0031080">
    <property type="term" value="C:nuclear pore outer ring"/>
    <property type="evidence" value="ECO:0007669"/>
    <property type="project" value="EnsemblFungi"/>
</dbReference>
<dbReference type="GO" id="GO:0035859">
    <property type="term" value="C:Seh1-associated complex"/>
    <property type="evidence" value="ECO:0007669"/>
    <property type="project" value="EnsemblFungi"/>
</dbReference>
<dbReference type="GO" id="GO:0005198">
    <property type="term" value="F:structural molecule activity"/>
    <property type="evidence" value="ECO:0007669"/>
    <property type="project" value="EnsemblFungi"/>
</dbReference>
<dbReference type="GO" id="GO:0090114">
    <property type="term" value="P:COPII-coated vesicle budding"/>
    <property type="evidence" value="ECO:0007669"/>
    <property type="project" value="EnsemblFungi"/>
</dbReference>
<dbReference type="GO" id="GO:0036503">
    <property type="term" value="P:ERAD pathway"/>
    <property type="evidence" value="ECO:0007669"/>
    <property type="project" value="EnsemblFungi"/>
</dbReference>
<dbReference type="GO" id="GO:0051028">
    <property type="term" value="P:mRNA transport"/>
    <property type="evidence" value="ECO:0007669"/>
    <property type="project" value="UniProtKB-KW"/>
</dbReference>
<dbReference type="GO" id="GO:0051664">
    <property type="term" value="P:nuclear pore localization"/>
    <property type="evidence" value="ECO:0007669"/>
    <property type="project" value="EnsemblFungi"/>
</dbReference>
<dbReference type="GO" id="GO:0045893">
    <property type="term" value="P:positive regulation of DNA-templated transcription"/>
    <property type="evidence" value="ECO:0007669"/>
    <property type="project" value="EnsemblFungi"/>
</dbReference>
<dbReference type="GO" id="GO:1902953">
    <property type="term" value="P:positive regulation of ER to Golgi vesicle-mediated transport"/>
    <property type="evidence" value="ECO:0007669"/>
    <property type="project" value="EnsemblFungi"/>
</dbReference>
<dbReference type="GO" id="GO:0070863">
    <property type="term" value="P:positive regulation of protein exit from endoplasmic reticulum"/>
    <property type="evidence" value="ECO:0007669"/>
    <property type="project" value="EnsemblFungi"/>
</dbReference>
<dbReference type="GO" id="GO:1904263">
    <property type="term" value="P:positive regulation of TORC1 signaling"/>
    <property type="evidence" value="ECO:0007669"/>
    <property type="project" value="EnsemblFungi"/>
</dbReference>
<dbReference type="GO" id="GO:0032527">
    <property type="term" value="P:protein exit from endoplasmic reticulum"/>
    <property type="evidence" value="ECO:0007669"/>
    <property type="project" value="TreeGrafter"/>
</dbReference>
<dbReference type="GO" id="GO:0006606">
    <property type="term" value="P:protein import into nucleus"/>
    <property type="evidence" value="ECO:0007669"/>
    <property type="project" value="TreeGrafter"/>
</dbReference>
<dbReference type="FunFam" id="2.130.10.10:FF:000017">
    <property type="entry name" value="SEC13 homolog (S. cerevisiae)"/>
    <property type="match status" value="1"/>
</dbReference>
<dbReference type="Gene3D" id="2.130.10.10">
    <property type="entry name" value="YVTN repeat-like/Quinoprotein amine dehydrogenase"/>
    <property type="match status" value="1"/>
</dbReference>
<dbReference type="InterPro" id="IPR037363">
    <property type="entry name" value="Sec13/Seh1_fam"/>
</dbReference>
<dbReference type="InterPro" id="IPR015943">
    <property type="entry name" value="WD40/YVTN_repeat-like_dom_sf"/>
</dbReference>
<dbReference type="InterPro" id="IPR036322">
    <property type="entry name" value="WD40_repeat_dom_sf"/>
</dbReference>
<dbReference type="InterPro" id="IPR001680">
    <property type="entry name" value="WD40_rpt"/>
</dbReference>
<dbReference type="PANTHER" id="PTHR11024">
    <property type="entry name" value="NUCLEAR PORE COMPLEX PROTEIN SEC13 / SEH1 FAMILY MEMBER"/>
    <property type="match status" value="1"/>
</dbReference>
<dbReference type="PANTHER" id="PTHR11024:SF2">
    <property type="entry name" value="PROTEIN SEC13 HOMOLOG"/>
    <property type="match status" value="1"/>
</dbReference>
<dbReference type="Pfam" id="PF00400">
    <property type="entry name" value="WD40"/>
    <property type="match status" value="4"/>
</dbReference>
<dbReference type="SMART" id="SM00320">
    <property type="entry name" value="WD40"/>
    <property type="match status" value="6"/>
</dbReference>
<dbReference type="SUPFAM" id="SSF50978">
    <property type="entry name" value="WD40 repeat-like"/>
    <property type="match status" value="1"/>
</dbReference>
<dbReference type="PROSITE" id="PS50082">
    <property type="entry name" value="WD_REPEATS_2"/>
    <property type="match status" value="2"/>
</dbReference>
<dbReference type="PROSITE" id="PS50294">
    <property type="entry name" value="WD_REPEATS_REGION"/>
    <property type="match status" value="1"/>
</dbReference>
<evidence type="ECO:0000250" key="1"/>
<evidence type="ECO:0000250" key="2">
    <source>
        <dbReference type="UniProtKB" id="Q04491"/>
    </source>
</evidence>
<evidence type="ECO:0000305" key="3"/>
<gene>
    <name type="primary">SEC131</name>
    <name type="ordered locus">CAGL0J08778g</name>
</gene>
<protein>
    <recommendedName>
        <fullName>Protein transport protein SEC13-1</fullName>
    </recommendedName>
</protein>
<proteinExistence type="inferred from homology"/>
<name>SC131_CANGA</name>
<reference key="1">
    <citation type="journal article" date="2004" name="Nature">
        <title>Genome evolution in yeasts.</title>
        <authorList>
            <person name="Dujon B."/>
            <person name="Sherman D."/>
            <person name="Fischer G."/>
            <person name="Durrens P."/>
            <person name="Casaregola S."/>
            <person name="Lafontaine I."/>
            <person name="de Montigny J."/>
            <person name="Marck C."/>
            <person name="Neuveglise C."/>
            <person name="Talla E."/>
            <person name="Goffard N."/>
            <person name="Frangeul L."/>
            <person name="Aigle M."/>
            <person name="Anthouard V."/>
            <person name="Babour A."/>
            <person name="Barbe V."/>
            <person name="Barnay S."/>
            <person name="Blanchin S."/>
            <person name="Beckerich J.-M."/>
            <person name="Beyne E."/>
            <person name="Bleykasten C."/>
            <person name="Boisrame A."/>
            <person name="Boyer J."/>
            <person name="Cattolico L."/>
            <person name="Confanioleri F."/>
            <person name="de Daruvar A."/>
            <person name="Despons L."/>
            <person name="Fabre E."/>
            <person name="Fairhead C."/>
            <person name="Ferry-Dumazet H."/>
            <person name="Groppi A."/>
            <person name="Hantraye F."/>
            <person name="Hennequin C."/>
            <person name="Jauniaux N."/>
            <person name="Joyet P."/>
            <person name="Kachouri R."/>
            <person name="Kerrest A."/>
            <person name="Koszul R."/>
            <person name="Lemaire M."/>
            <person name="Lesur I."/>
            <person name="Ma L."/>
            <person name="Muller H."/>
            <person name="Nicaud J.-M."/>
            <person name="Nikolski M."/>
            <person name="Oztas S."/>
            <person name="Ozier-Kalogeropoulos O."/>
            <person name="Pellenz S."/>
            <person name="Potier S."/>
            <person name="Richard G.-F."/>
            <person name="Straub M.-L."/>
            <person name="Suleau A."/>
            <person name="Swennen D."/>
            <person name="Tekaia F."/>
            <person name="Wesolowski-Louvel M."/>
            <person name="Westhof E."/>
            <person name="Wirth B."/>
            <person name="Zeniou-Meyer M."/>
            <person name="Zivanovic Y."/>
            <person name="Bolotin-Fukuhara M."/>
            <person name="Thierry A."/>
            <person name="Bouchier C."/>
            <person name="Caudron B."/>
            <person name="Scarpelli C."/>
            <person name="Gaillardin C."/>
            <person name="Weissenbach J."/>
            <person name="Wincker P."/>
            <person name="Souciet J.-L."/>
        </authorList>
    </citation>
    <scope>NUCLEOTIDE SEQUENCE [LARGE SCALE GENOMIC DNA]</scope>
    <source>
        <strain>ATCC 2001 / BCRC 20586 / JCM 3761 / NBRC 0622 / NRRL Y-65 / CBS 138</strain>
    </source>
</reference>
<feature type="chain" id="PRO_0000295409" description="Protein transport protein SEC13-1">
    <location>
        <begin position="1"/>
        <end position="298"/>
    </location>
</feature>
<feature type="repeat" description="WD 1">
    <location>
        <begin position="7"/>
        <end position="46"/>
    </location>
</feature>
<feature type="repeat" description="WD 2">
    <location>
        <begin position="51"/>
        <end position="92"/>
    </location>
</feature>
<feature type="repeat" description="WD 3">
    <location>
        <begin position="97"/>
        <end position="138"/>
    </location>
</feature>
<feature type="repeat" description="WD 4">
    <location>
        <begin position="143"/>
        <end position="196"/>
    </location>
</feature>
<feature type="repeat" description="WD 5">
    <location>
        <begin position="203"/>
        <end position="245"/>
    </location>
</feature>
<feature type="repeat" description="WD 6">
    <location>
        <begin position="253"/>
        <end position="292"/>
    </location>
</feature>
<keyword id="KW-0968">Cytoplasmic vesicle</keyword>
<keyword id="KW-0256">Endoplasmic reticulum</keyword>
<keyword id="KW-0931">ER-Golgi transport</keyword>
<keyword id="KW-0472">Membrane</keyword>
<keyword id="KW-0509">mRNA transport</keyword>
<keyword id="KW-0906">Nuclear pore complex</keyword>
<keyword id="KW-0539">Nucleus</keyword>
<keyword id="KW-0653">Protein transport</keyword>
<keyword id="KW-1185">Reference proteome</keyword>
<keyword id="KW-0677">Repeat</keyword>
<keyword id="KW-0811">Translocation</keyword>
<keyword id="KW-0813">Transport</keyword>
<keyword id="KW-0853">WD repeat</keyword>
<organism>
    <name type="scientific">Candida glabrata (strain ATCC 2001 / BCRC 20586 / JCM 3761 / NBRC 0622 / NRRL Y-65 / CBS 138)</name>
    <name type="common">Yeast</name>
    <name type="synonym">Nakaseomyces glabratus</name>
    <dbReference type="NCBI Taxonomy" id="284593"/>
    <lineage>
        <taxon>Eukaryota</taxon>
        <taxon>Fungi</taxon>
        <taxon>Dikarya</taxon>
        <taxon>Ascomycota</taxon>
        <taxon>Saccharomycotina</taxon>
        <taxon>Saccharomycetes</taxon>
        <taxon>Saccharomycetales</taxon>
        <taxon>Saccharomycetaceae</taxon>
        <taxon>Nakaseomyces</taxon>
    </lineage>
</organism>
<sequence length="298" mass="32951">MVEIANAHNDLIHDAVLDYYGKKLATCSSDKTIKIFEVEGESHKLVDTLVGHEGPVWRVDWAHPKFGTILASCSYDGKVIIWKEENDRWSQIAVHAVHTASVNSVQWAPHEYGALLLAASSDGKVSVVEFKENGTATPLIFDAHAIGVNAASWAPATVEGGNNPGEAPKEVRRFVTGGADNLVKIWRYNPETQSYLVEDTLEGHSDWVRDVAWSPSVLLRSYIASVSQDRTCNIWTQEDNTGPWVKTQLTPEEFPDVLWRASWSLSGNILAISGGDNKVTLWKENLNGKWESAGEVNQ</sequence>
<comment type="function">
    <text evidence="2">Component of the coat protein complex II (COPII) which promotes the formation of transport vesicles from the endoplasmic reticulum (ER). The coat has two main functions, the physical deformation of the endoplasmic reticulum membrane into vesicles and the selection of cargo molecules. It also functions as a component of the nuclear pore complex (NPC). NPC components, collectively referred to as nucleoporins (NUPs), can play the role of both NPC structural components and of docking or interaction partners for transiently associated nuclear transport factors. SEC13 is required for efficient mRNA export from the nucleus to the cytoplasm and for correct nuclear pore biogenesis and distribution (By similarity).</text>
</comment>
<comment type="subunit">
    <text evidence="2">The COPII coat is composed of at least 5 proteins: the SEC23/24 complex, the SEC13/31 complex, and the protein SAR1. Component of the nuclear pore complex (NPC). NPC constitutes the exclusive means of nucleocytoplasmic transport. NPCs allow the passive diffusion of ions and small molecules and the active, nuclear transport receptor-mediated bidirectional transport of macromolecules such as proteins, RNAs, ribonucleoparticles (RNPs), and ribosomal subunits across the nuclear envelope. Due to its 8-fold rotational symmetry, all subunits are present with 8 copies or multiples thereof.</text>
</comment>
<comment type="subcellular location">
    <subcellularLocation>
        <location evidence="1">Cytoplasmic vesicle</location>
        <location evidence="1">COPII-coated vesicle membrane</location>
        <topology evidence="1">Peripheral membrane protein</topology>
        <orientation evidence="1">Cytoplasmic side</orientation>
    </subcellularLocation>
    <subcellularLocation>
        <location evidence="1">Endoplasmic reticulum membrane</location>
        <topology evidence="1">Peripheral membrane protein</topology>
        <orientation evidence="1">Cytoplasmic side</orientation>
    </subcellularLocation>
    <subcellularLocation>
        <location evidence="2">Nucleus</location>
        <location evidence="2">Nuclear pore complex</location>
    </subcellularLocation>
</comment>
<comment type="similarity">
    <text evidence="3">Belongs to the WD repeat SEC13 family.</text>
</comment>
<accession>Q6FNV4</accession>